<organism>
    <name type="scientific">Staphylococcus aureus (strain USA300)</name>
    <dbReference type="NCBI Taxonomy" id="367830"/>
    <lineage>
        <taxon>Bacteria</taxon>
        <taxon>Bacillati</taxon>
        <taxon>Bacillota</taxon>
        <taxon>Bacilli</taxon>
        <taxon>Bacillales</taxon>
        <taxon>Staphylococcaceae</taxon>
        <taxon>Staphylococcus</taxon>
    </lineage>
</organism>
<reference key="1">
    <citation type="journal article" date="2006" name="Lancet">
        <title>Complete genome sequence of USA300, an epidemic clone of community-acquired meticillin-resistant Staphylococcus aureus.</title>
        <authorList>
            <person name="Diep B.A."/>
            <person name="Gill S.R."/>
            <person name="Chang R.F."/>
            <person name="Phan T.H."/>
            <person name="Chen J.H."/>
            <person name="Davidson M.G."/>
            <person name="Lin F."/>
            <person name="Lin J."/>
            <person name="Carleton H.A."/>
            <person name="Mongodin E.F."/>
            <person name="Sensabaugh G.F."/>
            <person name="Perdreau-Remington F."/>
        </authorList>
    </citation>
    <scope>NUCLEOTIDE SEQUENCE [LARGE SCALE GENOMIC DNA]</scope>
    <source>
        <strain>USA300</strain>
    </source>
</reference>
<evidence type="ECO:0000255" key="1"/>
<evidence type="ECO:0000305" key="2"/>
<feature type="chain" id="PRO_0000249037" description="UPF0382 membrane protein SAUSA300_0565">
    <location>
        <begin position="1"/>
        <end position="122"/>
    </location>
</feature>
<feature type="transmembrane region" description="Helical" evidence="1">
    <location>
        <begin position="3"/>
        <end position="23"/>
    </location>
</feature>
<feature type="transmembrane region" description="Helical" evidence="1">
    <location>
        <begin position="46"/>
        <end position="66"/>
    </location>
</feature>
<feature type="transmembrane region" description="Helical" evidence="1">
    <location>
        <begin position="69"/>
        <end position="89"/>
    </location>
</feature>
<feature type="transmembrane region" description="Helical" evidence="1">
    <location>
        <begin position="98"/>
        <end position="118"/>
    </location>
</feature>
<keyword id="KW-1003">Cell membrane</keyword>
<keyword id="KW-0472">Membrane</keyword>
<keyword id="KW-0812">Transmembrane</keyword>
<keyword id="KW-1133">Transmembrane helix</keyword>
<sequence>MKLFIILGALNAMMAVGTGAFGAHGLQGKISDHYLSVWEKATTYQMYHGLALLIIGVISGTTSINVNWAGWLIFAGIIFFSGSLYILVLTQIKVLGAITPIGGVLFIIGWIMLIIATFKFAG</sequence>
<name>Y565_STAA3</name>
<accession>Q2FJ60</accession>
<proteinExistence type="inferred from homology"/>
<comment type="subcellular location">
    <subcellularLocation>
        <location evidence="2">Cell membrane</location>
        <topology evidence="2">Multi-pass membrane protein</topology>
    </subcellularLocation>
</comment>
<comment type="similarity">
    <text evidence="2">Belongs to the UPF0382 family.</text>
</comment>
<gene>
    <name type="ordered locus">SAUSA300_0565</name>
</gene>
<dbReference type="EMBL" id="CP000255">
    <property type="protein sequence ID" value="ABD20639.1"/>
    <property type="molecule type" value="Genomic_DNA"/>
</dbReference>
<dbReference type="RefSeq" id="WP_000765183.1">
    <property type="nucleotide sequence ID" value="NZ_CP027476.1"/>
</dbReference>
<dbReference type="KEGG" id="saa:SAUSA300_0565"/>
<dbReference type="HOGENOM" id="CLU_096548_3_3_9"/>
<dbReference type="OMA" id="VEYQFYH"/>
<dbReference type="Proteomes" id="UP000001939">
    <property type="component" value="Chromosome"/>
</dbReference>
<dbReference type="GO" id="GO:0005886">
    <property type="term" value="C:plasma membrane"/>
    <property type="evidence" value="ECO:0007669"/>
    <property type="project" value="UniProtKB-SubCell"/>
</dbReference>
<dbReference type="InterPro" id="IPR006696">
    <property type="entry name" value="DUF423"/>
</dbReference>
<dbReference type="PANTHER" id="PTHR43461">
    <property type="entry name" value="TRANSMEMBRANE PROTEIN 256"/>
    <property type="match status" value="1"/>
</dbReference>
<dbReference type="PANTHER" id="PTHR43461:SF1">
    <property type="entry name" value="TRANSMEMBRANE PROTEIN 256"/>
    <property type="match status" value="1"/>
</dbReference>
<dbReference type="Pfam" id="PF04241">
    <property type="entry name" value="DUF423"/>
    <property type="match status" value="1"/>
</dbReference>
<protein>
    <recommendedName>
        <fullName>UPF0382 membrane protein SAUSA300_0565</fullName>
    </recommendedName>
</protein>